<dbReference type="EC" id="3.2.1.196" evidence="1"/>
<dbReference type="EMBL" id="CP001063">
    <property type="protein sequence ID" value="ACD07189.1"/>
    <property type="molecule type" value="Genomic_DNA"/>
</dbReference>
<dbReference type="RefSeq" id="WP_000192517.1">
    <property type="nucleotide sequence ID" value="NC_010658.1"/>
</dbReference>
<dbReference type="SMR" id="B2U4G1"/>
<dbReference type="STRING" id="344609.SbBS512_E3893"/>
<dbReference type="CAZy" id="CBM48">
    <property type="family name" value="Carbohydrate-Binding Module Family 48"/>
</dbReference>
<dbReference type="CAZy" id="GH13">
    <property type="family name" value="Glycoside Hydrolase Family 13"/>
</dbReference>
<dbReference type="KEGG" id="sbc:SbBS512_E3893"/>
<dbReference type="HOGENOM" id="CLU_011725_1_1_6"/>
<dbReference type="UniPathway" id="UPA00165"/>
<dbReference type="Proteomes" id="UP000001030">
    <property type="component" value="Chromosome"/>
</dbReference>
<dbReference type="GO" id="GO:0004133">
    <property type="term" value="F:glycogen debranching enzyme activity"/>
    <property type="evidence" value="ECO:0007669"/>
    <property type="project" value="UniProtKB-UniRule"/>
</dbReference>
<dbReference type="GO" id="GO:0004553">
    <property type="term" value="F:hydrolase activity, hydrolyzing O-glycosyl compounds"/>
    <property type="evidence" value="ECO:0007669"/>
    <property type="project" value="InterPro"/>
</dbReference>
<dbReference type="GO" id="GO:0005980">
    <property type="term" value="P:glycogen catabolic process"/>
    <property type="evidence" value="ECO:0007669"/>
    <property type="project" value="UniProtKB-UniRule"/>
</dbReference>
<dbReference type="CDD" id="cd11326">
    <property type="entry name" value="AmyAc_Glg_debranch"/>
    <property type="match status" value="1"/>
</dbReference>
<dbReference type="CDD" id="cd02856">
    <property type="entry name" value="E_set_GDE_Isoamylase_N"/>
    <property type="match status" value="1"/>
</dbReference>
<dbReference type="FunFam" id="2.60.40.10:FF:000468">
    <property type="entry name" value="Glycogen debranching enzyme"/>
    <property type="match status" value="1"/>
</dbReference>
<dbReference type="FunFam" id="3.20.20.80:FF:000031">
    <property type="entry name" value="Glycogen debranching enzyme"/>
    <property type="match status" value="1"/>
</dbReference>
<dbReference type="Gene3D" id="3.20.20.80">
    <property type="entry name" value="Glycosidases"/>
    <property type="match status" value="1"/>
</dbReference>
<dbReference type="Gene3D" id="2.60.40.1180">
    <property type="entry name" value="Golgi alpha-mannosidase II"/>
    <property type="match status" value="1"/>
</dbReference>
<dbReference type="Gene3D" id="2.60.40.10">
    <property type="entry name" value="Immunoglobulins"/>
    <property type="match status" value="1"/>
</dbReference>
<dbReference type="HAMAP" id="MF_01248">
    <property type="entry name" value="GlgX"/>
    <property type="match status" value="1"/>
</dbReference>
<dbReference type="InterPro" id="IPR040784">
    <property type="entry name" value="GlgX_C"/>
</dbReference>
<dbReference type="InterPro" id="IPR044505">
    <property type="entry name" value="GlgX_Isoamylase_N_E_set"/>
</dbReference>
<dbReference type="InterPro" id="IPR006047">
    <property type="entry name" value="Glyco_hydro_13_cat_dom"/>
</dbReference>
<dbReference type="InterPro" id="IPR004193">
    <property type="entry name" value="Glyco_hydro_13_N"/>
</dbReference>
<dbReference type="InterPro" id="IPR013780">
    <property type="entry name" value="Glyco_hydro_b"/>
</dbReference>
<dbReference type="InterPro" id="IPR022844">
    <property type="entry name" value="Glycogen_debranch_bac"/>
</dbReference>
<dbReference type="InterPro" id="IPR011837">
    <property type="entry name" value="Glycogen_debranch_GlgX"/>
</dbReference>
<dbReference type="InterPro" id="IPR017853">
    <property type="entry name" value="Glycoside_hydrolase_SF"/>
</dbReference>
<dbReference type="InterPro" id="IPR013783">
    <property type="entry name" value="Ig-like_fold"/>
</dbReference>
<dbReference type="InterPro" id="IPR014756">
    <property type="entry name" value="Ig_E-set"/>
</dbReference>
<dbReference type="NCBIfam" id="TIGR02100">
    <property type="entry name" value="glgX_debranch"/>
    <property type="match status" value="1"/>
</dbReference>
<dbReference type="NCBIfam" id="NF002983">
    <property type="entry name" value="PRK03705.1"/>
    <property type="match status" value="1"/>
</dbReference>
<dbReference type="PANTHER" id="PTHR43002">
    <property type="entry name" value="GLYCOGEN DEBRANCHING ENZYME"/>
    <property type="match status" value="1"/>
</dbReference>
<dbReference type="Pfam" id="PF00128">
    <property type="entry name" value="Alpha-amylase"/>
    <property type="match status" value="1"/>
</dbReference>
<dbReference type="Pfam" id="PF02922">
    <property type="entry name" value="CBM_48"/>
    <property type="match status" value="1"/>
</dbReference>
<dbReference type="Pfam" id="PF18390">
    <property type="entry name" value="GlgX_C"/>
    <property type="match status" value="1"/>
</dbReference>
<dbReference type="SMART" id="SM00642">
    <property type="entry name" value="Aamy"/>
    <property type="match status" value="1"/>
</dbReference>
<dbReference type="SUPFAM" id="SSF51445">
    <property type="entry name" value="(Trans)glycosidases"/>
    <property type="match status" value="1"/>
</dbReference>
<dbReference type="SUPFAM" id="SSF81296">
    <property type="entry name" value="E set domains"/>
    <property type="match status" value="1"/>
</dbReference>
<comment type="function">
    <text evidence="1">Removes maltotriose and maltotetraose chains that are attached by 1,6-alpha-linkage to the limit dextrin main chain, generating a debranched limit dextrin.</text>
</comment>
<comment type="catalytic activity">
    <reaction evidence="1">
        <text>Hydrolysis of (1-&gt;6)-alpha-D-glucosidic linkages to branches with degrees of polymerization of three or four glucose residues in limit dextrin.</text>
        <dbReference type="EC" id="3.2.1.196"/>
    </reaction>
</comment>
<comment type="pathway">
    <text evidence="1">Glycan degradation; glycogen degradation.</text>
</comment>
<comment type="similarity">
    <text evidence="1">Belongs to the glycosyl hydrolase 13 family.</text>
</comment>
<protein>
    <recommendedName>
        <fullName evidence="1">Glycogen debranching enzyme</fullName>
        <ecNumber evidence="1">3.2.1.196</ecNumber>
    </recommendedName>
    <alternativeName>
        <fullName evidence="1">Limit dextrin alpha-1,6-maltotetraose-hydrolase</fullName>
    </alternativeName>
</protein>
<reference key="1">
    <citation type="submission" date="2008-05" db="EMBL/GenBank/DDBJ databases">
        <title>Complete sequence of Shigella boydii serotype 18 strain BS512.</title>
        <authorList>
            <person name="Rasko D.A."/>
            <person name="Rosovitz M."/>
            <person name="Maurelli A.T."/>
            <person name="Myers G."/>
            <person name="Seshadri R."/>
            <person name="Cer R."/>
            <person name="Jiang L."/>
            <person name="Ravel J."/>
            <person name="Sebastian Y."/>
        </authorList>
    </citation>
    <scope>NUCLEOTIDE SEQUENCE [LARGE SCALE GENOMIC DNA]</scope>
    <source>
        <strain>CDC 3083-94 / BS512</strain>
    </source>
</reference>
<sequence length="657" mass="73563">MTQLAIGKPAPLGAHYDGQGVNFTLFSAHAERVELCVFDANGQEHRYDLPGHSGDIWHGYLPDARPGLRYGYRVHGPWQPADGHRFNPAKLLIDPCARQIDGEFKDNPLLHAGHNEPDYRDNAAIAPKCVVVVDHYDWEDDAPPRTPWGSTIIYEAHVKGLTYLHPEIPVEIRGTYKALGHPVMINYLKQLGITALELLPVAQFASEPRLQRMGLSNYWGYNPVAMFALHPAYACSPETALDEFRDAIKALHKAGIEVILDIVLNHSAELDLDGPLFSLRGIDNRSYYWIREDGDYHNWTGCGNTLNLSHPAVVDYASACLRYWVETCHVDGFRFDLAAVMGRTPEFRQDAPLFTAIQNCPVLSQVKLIAEPWDIAPGGYQVGNFPPLFAEWNDHFRDAARRFWLHYDLPLGAFAGRFAASSDVFKRNGRLPSAAINLVTAHDGFTLRDCVCFNHKHNEANGEENRDGTNNNYSNNHGKEGLGGSLDLVERRRDSIHALLTTLLLSQGTPMLLAGDEHGHSQHGNNNAYCQDNQLTWLDWSQASSGLTAFTAALIHLRKRIPALVENRWWEEGDGNVRWLNRYAQPLSTDEWQNGPKQLQILLSDRFLIAINATLEVTEIVLPAGEWHAIPPFAGEDNPVITAVWQGPAHGLCVFQR</sequence>
<name>GLGX_SHIB3</name>
<evidence type="ECO:0000255" key="1">
    <source>
        <dbReference type="HAMAP-Rule" id="MF_01248"/>
    </source>
</evidence>
<evidence type="ECO:0000256" key="2">
    <source>
        <dbReference type="SAM" id="MobiDB-lite"/>
    </source>
</evidence>
<organism>
    <name type="scientific">Shigella boydii serotype 18 (strain CDC 3083-94 / BS512)</name>
    <dbReference type="NCBI Taxonomy" id="344609"/>
    <lineage>
        <taxon>Bacteria</taxon>
        <taxon>Pseudomonadati</taxon>
        <taxon>Pseudomonadota</taxon>
        <taxon>Gammaproteobacteria</taxon>
        <taxon>Enterobacterales</taxon>
        <taxon>Enterobacteriaceae</taxon>
        <taxon>Shigella</taxon>
    </lineage>
</organism>
<keyword id="KW-0119">Carbohydrate metabolism</keyword>
<keyword id="KW-0321">Glycogen metabolism</keyword>
<keyword id="KW-0326">Glycosidase</keyword>
<keyword id="KW-0378">Hydrolase</keyword>
<keyword id="KW-1185">Reference proteome</keyword>
<proteinExistence type="inferred from homology"/>
<feature type="chain" id="PRO_1000139880" description="Glycogen debranching enzyme">
    <location>
        <begin position="1"/>
        <end position="657"/>
    </location>
</feature>
<feature type="region of interest" description="Disordered" evidence="2">
    <location>
        <begin position="458"/>
        <end position="479"/>
    </location>
</feature>
<feature type="compositionally biased region" description="Basic and acidic residues" evidence="2">
    <location>
        <begin position="458"/>
        <end position="467"/>
    </location>
</feature>
<feature type="active site" description="Nucleophile" evidence="1">
    <location>
        <position position="336"/>
    </location>
</feature>
<feature type="active site" description="Proton donor" evidence="1">
    <location>
        <position position="371"/>
    </location>
</feature>
<feature type="site" description="Transition state stabilizer" evidence="1">
    <location>
        <position position="443"/>
    </location>
</feature>
<accession>B2U4G1</accession>
<gene>
    <name evidence="1" type="primary">glgX</name>
    <name type="ordered locus">SbBS512_E3893</name>
</gene>